<sequence>MSHILDKIDTVYPFPPKPIPLTQDEKAAYIASIKQLLKEKDAVLIAHYYTDPEIQALAEETGGFVGDSLEMAKFGNRHPAGTLIIAGVRFMGESAKILTPEKRILMPTLEAECSLDLGCPADKFTEFCDAHPDHTVVVYANTSAAVKARADWVVTSSIALEIVEHLDAEDKPIIWGPDRHLGSYIANKTGADMLLWQGECVVHDEFSADALRKMKAVYPDAAILVHPESPASVVELADAVGSTSQLIKAAKELPQQKMIVATDKGIFFKMQQLVPEKELIEAPTAGAGATCRSCAHCPWMAMNGLKAIETALREGGEQHEIFVDEALRVKSLIPLNRMLDFAEKLNMQVKGNV</sequence>
<name>NADA_VIBVY</name>
<organism>
    <name type="scientific">Vibrio vulnificus (strain YJ016)</name>
    <dbReference type="NCBI Taxonomy" id="196600"/>
    <lineage>
        <taxon>Bacteria</taxon>
        <taxon>Pseudomonadati</taxon>
        <taxon>Pseudomonadota</taxon>
        <taxon>Gammaproteobacteria</taxon>
        <taxon>Vibrionales</taxon>
        <taxon>Vibrionaceae</taxon>
        <taxon>Vibrio</taxon>
    </lineage>
</organism>
<evidence type="ECO:0000255" key="1">
    <source>
        <dbReference type="HAMAP-Rule" id="MF_00567"/>
    </source>
</evidence>
<evidence type="ECO:0000305" key="2"/>
<keyword id="KW-0004">4Fe-4S</keyword>
<keyword id="KW-0963">Cytoplasm</keyword>
<keyword id="KW-0408">Iron</keyword>
<keyword id="KW-0411">Iron-sulfur</keyword>
<keyword id="KW-0479">Metal-binding</keyword>
<keyword id="KW-0662">Pyridine nucleotide biosynthesis</keyword>
<keyword id="KW-0808">Transferase</keyword>
<protein>
    <recommendedName>
        <fullName evidence="1">Quinolinate synthase</fullName>
        <ecNumber evidence="1">2.5.1.72</ecNumber>
    </recommendedName>
</protein>
<dbReference type="EC" id="2.5.1.72" evidence="1"/>
<dbReference type="EMBL" id="BA000037">
    <property type="protein sequence ID" value="BAC95036.1"/>
    <property type="status" value="ALT_INIT"/>
    <property type="molecule type" value="Genomic_DNA"/>
</dbReference>
<dbReference type="RefSeq" id="WP_043877268.1">
    <property type="nucleotide sequence ID" value="NC_005139.1"/>
</dbReference>
<dbReference type="SMR" id="Q7MJ90"/>
<dbReference type="STRING" id="672.VV93_v1c19820"/>
<dbReference type="KEGG" id="vvy:VV2272"/>
<dbReference type="PATRIC" id="fig|196600.6.peg.2283"/>
<dbReference type="eggNOG" id="COG0379">
    <property type="taxonomic scope" value="Bacteria"/>
</dbReference>
<dbReference type="HOGENOM" id="CLU_047382_1_0_6"/>
<dbReference type="UniPathway" id="UPA00253">
    <property type="reaction ID" value="UER00327"/>
</dbReference>
<dbReference type="Proteomes" id="UP000002675">
    <property type="component" value="Chromosome I"/>
</dbReference>
<dbReference type="GO" id="GO:0005829">
    <property type="term" value="C:cytosol"/>
    <property type="evidence" value="ECO:0007669"/>
    <property type="project" value="TreeGrafter"/>
</dbReference>
<dbReference type="GO" id="GO:0051539">
    <property type="term" value="F:4 iron, 4 sulfur cluster binding"/>
    <property type="evidence" value="ECO:0007669"/>
    <property type="project" value="UniProtKB-KW"/>
</dbReference>
<dbReference type="GO" id="GO:0046872">
    <property type="term" value="F:metal ion binding"/>
    <property type="evidence" value="ECO:0007669"/>
    <property type="project" value="UniProtKB-KW"/>
</dbReference>
<dbReference type="GO" id="GO:0008987">
    <property type="term" value="F:quinolinate synthetase A activity"/>
    <property type="evidence" value="ECO:0007669"/>
    <property type="project" value="UniProtKB-UniRule"/>
</dbReference>
<dbReference type="GO" id="GO:0034628">
    <property type="term" value="P:'de novo' NAD biosynthetic process from L-aspartate"/>
    <property type="evidence" value="ECO:0007669"/>
    <property type="project" value="TreeGrafter"/>
</dbReference>
<dbReference type="FunFam" id="3.40.50.10800:FF:000001">
    <property type="entry name" value="Quinolinate synthase A"/>
    <property type="match status" value="1"/>
</dbReference>
<dbReference type="FunFam" id="3.40.50.10800:FF:000003">
    <property type="entry name" value="Quinolinate synthase A"/>
    <property type="match status" value="1"/>
</dbReference>
<dbReference type="Gene3D" id="3.40.50.10800">
    <property type="entry name" value="NadA-like"/>
    <property type="match status" value="3"/>
</dbReference>
<dbReference type="HAMAP" id="MF_00567">
    <property type="entry name" value="NadA_type1"/>
    <property type="match status" value="1"/>
</dbReference>
<dbReference type="InterPro" id="IPR003473">
    <property type="entry name" value="NadA"/>
</dbReference>
<dbReference type="InterPro" id="IPR036094">
    <property type="entry name" value="NadA_sf"/>
</dbReference>
<dbReference type="InterPro" id="IPR023513">
    <property type="entry name" value="Quinolinate_synth_A_type1"/>
</dbReference>
<dbReference type="NCBIfam" id="TIGR00550">
    <property type="entry name" value="nadA"/>
    <property type="match status" value="1"/>
</dbReference>
<dbReference type="NCBIfam" id="NF006877">
    <property type="entry name" value="PRK09375.1-1"/>
    <property type="match status" value="1"/>
</dbReference>
<dbReference type="NCBIfam" id="NF006878">
    <property type="entry name" value="PRK09375.1-2"/>
    <property type="match status" value="1"/>
</dbReference>
<dbReference type="PANTHER" id="PTHR30573:SF0">
    <property type="entry name" value="QUINOLINATE SYNTHASE, CHLOROPLASTIC"/>
    <property type="match status" value="1"/>
</dbReference>
<dbReference type="PANTHER" id="PTHR30573">
    <property type="entry name" value="QUINOLINATE SYNTHETASE A"/>
    <property type="match status" value="1"/>
</dbReference>
<dbReference type="Pfam" id="PF02445">
    <property type="entry name" value="NadA"/>
    <property type="match status" value="1"/>
</dbReference>
<dbReference type="SUPFAM" id="SSF142754">
    <property type="entry name" value="NadA-like"/>
    <property type="match status" value="1"/>
</dbReference>
<comment type="function">
    <text evidence="1">Catalyzes the condensation of iminoaspartate with dihydroxyacetone phosphate to form quinolinate.</text>
</comment>
<comment type="catalytic activity">
    <reaction evidence="1">
        <text>iminosuccinate + dihydroxyacetone phosphate = quinolinate + phosphate + 2 H2O + H(+)</text>
        <dbReference type="Rhea" id="RHEA:25888"/>
        <dbReference type="ChEBI" id="CHEBI:15377"/>
        <dbReference type="ChEBI" id="CHEBI:15378"/>
        <dbReference type="ChEBI" id="CHEBI:29959"/>
        <dbReference type="ChEBI" id="CHEBI:43474"/>
        <dbReference type="ChEBI" id="CHEBI:57642"/>
        <dbReference type="ChEBI" id="CHEBI:77875"/>
        <dbReference type="EC" id="2.5.1.72"/>
    </reaction>
    <physiologicalReaction direction="left-to-right" evidence="1">
        <dbReference type="Rhea" id="RHEA:25889"/>
    </physiologicalReaction>
</comment>
<comment type="cofactor">
    <cofactor evidence="1">
        <name>[4Fe-4S] cluster</name>
        <dbReference type="ChEBI" id="CHEBI:49883"/>
    </cofactor>
    <text evidence="1">Binds 1 [4Fe-4S] cluster per subunit.</text>
</comment>
<comment type="pathway">
    <text evidence="1">Cofactor biosynthesis; NAD(+) biosynthesis; quinolinate from iminoaspartate: step 1/1.</text>
</comment>
<comment type="subcellular location">
    <subcellularLocation>
        <location evidence="1">Cytoplasm</location>
    </subcellularLocation>
</comment>
<comment type="similarity">
    <text evidence="1">Belongs to the quinolinate synthase family. Type 1 subfamily.</text>
</comment>
<comment type="sequence caution" evidence="2">
    <conflict type="erroneous initiation">
        <sequence resource="EMBL-CDS" id="BAC95036"/>
    </conflict>
</comment>
<accession>Q7MJ90</accession>
<gene>
    <name evidence="1" type="primary">nadA</name>
    <name type="ordered locus">VV2272</name>
</gene>
<feature type="chain" id="PRO_0000155776" description="Quinolinate synthase">
    <location>
        <begin position="1"/>
        <end position="353"/>
    </location>
</feature>
<feature type="binding site" evidence="1">
    <location>
        <position position="47"/>
    </location>
    <ligand>
        <name>iminosuccinate</name>
        <dbReference type="ChEBI" id="CHEBI:77875"/>
    </ligand>
</feature>
<feature type="binding site" evidence="1">
    <location>
        <position position="68"/>
    </location>
    <ligand>
        <name>iminosuccinate</name>
        <dbReference type="ChEBI" id="CHEBI:77875"/>
    </ligand>
</feature>
<feature type="binding site" evidence="1">
    <location>
        <position position="113"/>
    </location>
    <ligand>
        <name>[4Fe-4S] cluster</name>
        <dbReference type="ChEBI" id="CHEBI:49883"/>
    </ligand>
</feature>
<feature type="binding site" evidence="1">
    <location>
        <begin position="139"/>
        <end position="141"/>
    </location>
    <ligand>
        <name>iminosuccinate</name>
        <dbReference type="ChEBI" id="CHEBI:77875"/>
    </ligand>
</feature>
<feature type="binding site" evidence="1">
    <location>
        <position position="156"/>
    </location>
    <ligand>
        <name>iminosuccinate</name>
        <dbReference type="ChEBI" id="CHEBI:77875"/>
    </ligand>
</feature>
<feature type="binding site" evidence="1">
    <location>
        <position position="200"/>
    </location>
    <ligand>
        <name>[4Fe-4S] cluster</name>
        <dbReference type="ChEBI" id="CHEBI:49883"/>
    </ligand>
</feature>
<feature type="binding site" evidence="1">
    <location>
        <begin position="226"/>
        <end position="228"/>
    </location>
    <ligand>
        <name>iminosuccinate</name>
        <dbReference type="ChEBI" id="CHEBI:77875"/>
    </ligand>
</feature>
<feature type="binding site" evidence="1">
    <location>
        <position position="243"/>
    </location>
    <ligand>
        <name>iminosuccinate</name>
        <dbReference type="ChEBI" id="CHEBI:77875"/>
    </ligand>
</feature>
<feature type="binding site" evidence="1">
    <location>
        <position position="297"/>
    </location>
    <ligand>
        <name>[4Fe-4S] cluster</name>
        <dbReference type="ChEBI" id="CHEBI:49883"/>
    </ligand>
</feature>
<reference key="1">
    <citation type="journal article" date="2003" name="Genome Res.">
        <title>Comparative genome analysis of Vibrio vulnificus, a marine pathogen.</title>
        <authorList>
            <person name="Chen C.-Y."/>
            <person name="Wu K.-M."/>
            <person name="Chang Y.-C."/>
            <person name="Chang C.-H."/>
            <person name="Tsai H.-C."/>
            <person name="Liao T.-L."/>
            <person name="Liu Y.-M."/>
            <person name="Chen H.-J."/>
            <person name="Shen A.B.-T."/>
            <person name="Li J.-C."/>
            <person name="Su T.-L."/>
            <person name="Shao C.-P."/>
            <person name="Lee C.-T."/>
            <person name="Hor L.-I."/>
            <person name="Tsai S.-F."/>
        </authorList>
    </citation>
    <scope>NUCLEOTIDE SEQUENCE [LARGE SCALE GENOMIC DNA]</scope>
    <source>
        <strain>YJ016</strain>
    </source>
</reference>
<proteinExistence type="inferred from homology"/>